<accession>Q2QD68</accession>
<accession>A5J1V5</accession>
<accession>Q4VZJ6</accession>
<gene>
    <name evidence="1" type="primary">rpl33</name>
    <name type="ordered locus">CsCp063</name>
</gene>
<geneLocation type="chloroplast"/>
<proteinExistence type="inferred from homology"/>
<organism>
    <name type="scientific">Cucumis sativus</name>
    <name type="common">Cucumber</name>
    <dbReference type="NCBI Taxonomy" id="3659"/>
    <lineage>
        <taxon>Eukaryota</taxon>
        <taxon>Viridiplantae</taxon>
        <taxon>Streptophyta</taxon>
        <taxon>Embryophyta</taxon>
        <taxon>Tracheophyta</taxon>
        <taxon>Spermatophyta</taxon>
        <taxon>Magnoliopsida</taxon>
        <taxon>eudicotyledons</taxon>
        <taxon>Gunneridae</taxon>
        <taxon>Pentapetalae</taxon>
        <taxon>rosids</taxon>
        <taxon>fabids</taxon>
        <taxon>Cucurbitales</taxon>
        <taxon>Cucurbitaceae</taxon>
        <taxon>Benincaseae</taxon>
        <taxon>Cucumis</taxon>
    </lineage>
</organism>
<dbReference type="EMBL" id="DQ119058">
    <property type="protein sequence ID" value="AAZ94672.1"/>
    <property type="molecule type" value="Genomic_DNA"/>
</dbReference>
<dbReference type="EMBL" id="AJ970307">
    <property type="protein sequence ID" value="CAJ00779.1"/>
    <property type="molecule type" value="Genomic_DNA"/>
</dbReference>
<dbReference type="EMBL" id="DQ865975">
    <property type="protein sequence ID" value="ABI97438.1"/>
    <property type="molecule type" value="Genomic_DNA"/>
</dbReference>
<dbReference type="EMBL" id="DQ865976">
    <property type="protein sequence ID" value="ABI98766.1"/>
    <property type="molecule type" value="Genomic_DNA"/>
</dbReference>
<dbReference type="RefSeq" id="YP_247620.1">
    <property type="nucleotide sequence ID" value="NC_007144.1"/>
</dbReference>
<dbReference type="GeneID" id="3429299"/>
<dbReference type="KEGG" id="csv:3429299"/>
<dbReference type="OrthoDB" id="361870at2759"/>
<dbReference type="GO" id="GO:0009507">
    <property type="term" value="C:chloroplast"/>
    <property type="evidence" value="ECO:0007669"/>
    <property type="project" value="UniProtKB-SubCell"/>
</dbReference>
<dbReference type="GO" id="GO:1990904">
    <property type="term" value="C:ribonucleoprotein complex"/>
    <property type="evidence" value="ECO:0007669"/>
    <property type="project" value="UniProtKB-KW"/>
</dbReference>
<dbReference type="GO" id="GO:0005840">
    <property type="term" value="C:ribosome"/>
    <property type="evidence" value="ECO:0007669"/>
    <property type="project" value="UniProtKB-KW"/>
</dbReference>
<dbReference type="GO" id="GO:0003735">
    <property type="term" value="F:structural constituent of ribosome"/>
    <property type="evidence" value="ECO:0007669"/>
    <property type="project" value="InterPro"/>
</dbReference>
<dbReference type="GO" id="GO:0006412">
    <property type="term" value="P:translation"/>
    <property type="evidence" value="ECO:0007669"/>
    <property type="project" value="UniProtKB-UniRule"/>
</dbReference>
<dbReference type="Gene3D" id="2.20.28.120">
    <property type="entry name" value="Ribosomal protein L33"/>
    <property type="match status" value="1"/>
</dbReference>
<dbReference type="HAMAP" id="MF_00294">
    <property type="entry name" value="Ribosomal_bL33"/>
    <property type="match status" value="1"/>
</dbReference>
<dbReference type="InterPro" id="IPR001705">
    <property type="entry name" value="Ribosomal_bL33"/>
</dbReference>
<dbReference type="InterPro" id="IPR018264">
    <property type="entry name" value="Ribosomal_bL33_CS"/>
</dbReference>
<dbReference type="InterPro" id="IPR038584">
    <property type="entry name" value="Ribosomal_bL33_sf"/>
</dbReference>
<dbReference type="InterPro" id="IPR011332">
    <property type="entry name" value="Ribosomal_zn-bd"/>
</dbReference>
<dbReference type="NCBIfam" id="NF001764">
    <property type="entry name" value="PRK00504.1"/>
    <property type="match status" value="1"/>
</dbReference>
<dbReference type="NCBIfam" id="NF001860">
    <property type="entry name" value="PRK00595.1"/>
    <property type="match status" value="1"/>
</dbReference>
<dbReference type="NCBIfam" id="TIGR01023">
    <property type="entry name" value="rpmG_bact"/>
    <property type="match status" value="1"/>
</dbReference>
<dbReference type="PANTHER" id="PTHR43168">
    <property type="entry name" value="50S RIBOSOMAL PROTEIN L33, CHLOROPLASTIC"/>
    <property type="match status" value="1"/>
</dbReference>
<dbReference type="PANTHER" id="PTHR43168:SF2">
    <property type="entry name" value="LARGE RIBOSOMAL SUBUNIT PROTEIN BL33C"/>
    <property type="match status" value="1"/>
</dbReference>
<dbReference type="Pfam" id="PF00471">
    <property type="entry name" value="Ribosomal_L33"/>
    <property type="match status" value="1"/>
</dbReference>
<dbReference type="SUPFAM" id="SSF57829">
    <property type="entry name" value="Zn-binding ribosomal proteins"/>
    <property type="match status" value="1"/>
</dbReference>
<dbReference type="PROSITE" id="PS00582">
    <property type="entry name" value="RIBOSOMAL_L33"/>
    <property type="match status" value="1"/>
</dbReference>
<feature type="chain" id="PRO_0000276498" description="Large ribosomal subunit protein bL33c">
    <location>
        <begin position="1"/>
        <end position="66"/>
    </location>
</feature>
<feature type="sequence conflict" description="In Ref. 2; CAJ00779." evidence="2" ref="2">
    <original>CTRCV</original>
    <variation>GLVC</variation>
    <location>
        <begin position="15"/>
        <end position="19"/>
    </location>
</feature>
<keyword id="KW-0150">Chloroplast</keyword>
<keyword id="KW-0934">Plastid</keyword>
<keyword id="KW-0687">Ribonucleoprotein</keyword>
<keyword id="KW-0689">Ribosomal protein</keyword>
<protein>
    <recommendedName>
        <fullName evidence="1">Large ribosomal subunit protein bL33c</fullName>
    </recommendedName>
    <alternativeName>
        <fullName evidence="2">50S ribosomal protein L33, chloroplastic</fullName>
    </alternativeName>
</protein>
<evidence type="ECO:0000255" key="1">
    <source>
        <dbReference type="HAMAP-Rule" id="MF_00294"/>
    </source>
</evidence>
<evidence type="ECO:0000305" key="2"/>
<reference key="1">
    <citation type="journal article" date="2006" name="Plant Cell Rep.">
        <title>Complete sequence and organization of the cucumber (Cucumis sativus L. cv. Baekmibaekdadagi) chloroplast genome.</title>
        <authorList>
            <person name="Kim J.-S."/>
            <person name="Jung J.D."/>
            <person name="Lee J.-A."/>
            <person name="Park H.-W."/>
            <person name="Oh K.-H."/>
            <person name="Jeong W.J."/>
            <person name="Choi D.-W."/>
            <person name="Liu J.R."/>
            <person name="Cho K.Y."/>
        </authorList>
    </citation>
    <scope>NUCLEOTIDE SEQUENCE [LARGE SCALE GENOMIC DNA]</scope>
    <source>
        <strain>cv. Baekmibaekdadagi</strain>
    </source>
</reference>
<reference key="2">
    <citation type="journal article" date="2007" name="Cell. Mol. Biol. Lett.">
        <title>The complete structure of the cucumber (Cucumis sativus L.) chloroplast genome: its composition and comparative analysis.</title>
        <authorList>
            <person name="Plader W.W."/>
            <person name="Yukawa Y."/>
            <person name="Sugiura M."/>
            <person name="Malepszy S."/>
        </authorList>
    </citation>
    <scope>NUCLEOTIDE SEQUENCE [LARGE SCALE GENOMIC DNA]</scope>
    <source>
        <strain>cv. Borszczagowski</strain>
    </source>
</reference>
<reference key="3">
    <citation type="journal article" date="2007" name="Genome">
        <title>Sequencing cucumber (Cucumis sativus L.) chloroplast genomes identifies differences between chilling-tolerant and -susceptible cucumber lines.</title>
        <authorList>
            <person name="Chung S.-M."/>
            <person name="Gordon V.S."/>
            <person name="Staub J.E."/>
        </authorList>
    </citation>
    <scope>NUCLEOTIDE SEQUENCE [LARGE SCALE GENOMIC DNA]</scope>
    <source>
        <strain>cv. Chipper</strain>
        <strain>cv. Gy14</strain>
    </source>
</reference>
<comment type="subcellular location">
    <subcellularLocation>
        <location>Plastid</location>
        <location>Chloroplast</location>
    </subcellularLocation>
</comment>
<comment type="similarity">
    <text evidence="1">Belongs to the bacterial ribosomal protein bL33 family.</text>
</comment>
<name>RK33_CUCSA</name>
<sequence>MAKGKDARVTVILECTRCVRNGVNKQSIGISRYITQKNRHNTPSRLELRKFCPRCYKHTIHGEIKK</sequence>